<name>RS10_BUCCC</name>
<evidence type="ECO:0000255" key="1">
    <source>
        <dbReference type="HAMAP-Rule" id="MF_00508"/>
    </source>
</evidence>
<evidence type="ECO:0000305" key="2"/>
<proteinExistence type="inferred from homology"/>
<protein>
    <recommendedName>
        <fullName evidence="1">Small ribosomal subunit protein uS10</fullName>
    </recommendedName>
    <alternativeName>
        <fullName evidence="2">30S ribosomal protein S10</fullName>
    </alternativeName>
</protein>
<accession>Q057A3</accession>
<dbReference type="EMBL" id="CP000263">
    <property type="protein sequence ID" value="ABJ90796.1"/>
    <property type="molecule type" value="Genomic_DNA"/>
</dbReference>
<dbReference type="RefSeq" id="WP_011672715.1">
    <property type="nucleotide sequence ID" value="NC_008513.1"/>
</dbReference>
<dbReference type="SMR" id="Q057A3"/>
<dbReference type="STRING" id="372461.BCc_342"/>
<dbReference type="KEGG" id="bcc:BCc_342"/>
<dbReference type="eggNOG" id="COG0051">
    <property type="taxonomic scope" value="Bacteria"/>
</dbReference>
<dbReference type="HOGENOM" id="CLU_122625_1_3_6"/>
<dbReference type="OrthoDB" id="9804464at2"/>
<dbReference type="Proteomes" id="UP000000669">
    <property type="component" value="Chromosome"/>
</dbReference>
<dbReference type="GO" id="GO:1990904">
    <property type="term" value="C:ribonucleoprotein complex"/>
    <property type="evidence" value="ECO:0007669"/>
    <property type="project" value="UniProtKB-KW"/>
</dbReference>
<dbReference type="GO" id="GO:0005840">
    <property type="term" value="C:ribosome"/>
    <property type="evidence" value="ECO:0007669"/>
    <property type="project" value="UniProtKB-KW"/>
</dbReference>
<dbReference type="GO" id="GO:0003735">
    <property type="term" value="F:structural constituent of ribosome"/>
    <property type="evidence" value="ECO:0007669"/>
    <property type="project" value="InterPro"/>
</dbReference>
<dbReference type="GO" id="GO:0000049">
    <property type="term" value="F:tRNA binding"/>
    <property type="evidence" value="ECO:0007669"/>
    <property type="project" value="UniProtKB-UniRule"/>
</dbReference>
<dbReference type="GO" id="GO:0006412">
    <property type="term" value="P:translation"/>
    <property type="evidence" value="ECO:0007669"/>
    <property type="project" value="UniProtKB-UniRule"/>
</dbReference>
<dbReference type="FunFam" id="3.30.70.600:FF:000001">
    <property type="entry name" value="30S ribosomal protein S10"/>
    <property type="match status" value="1"/>
</dbReference>
<dbReference type="Gene3D" id="3.30.70.600">
    <property type="entry name" value="Ribosomal protein S10 domain"/>
    <property type="match status" value="1"/>
</dbReference>
<dbReference type="HAMAP" id="MF_00508">
    <property type="entry name" value="Ribosomal_uS10"/>
    <property type="match status" value="1"/>
</dbReference>
<dbReference type="InterPro" id="IPR001848">
    <property type="entry name" value="Ribosomal_uS10"/>
</dbReference>
<dbReference type="InterPro" id="IPR018268">
    <property type="entry name" value="Ribosomal_uS10_CS"/>
</dbReference>
<dbReference type="InterPro" id="IPR027486">
    <property type="entry name" value="Ribosomal_uS10_dom"/>
</dbReference>
<dbReference type="InterPro" id="IPR036838">
    <property type="entry name" value="Ribosomal_uS10_dom_sf"/>
</dbReference>
<dbReference type="NCBIfam" id="NF001861">
    <property type="entry name" value="PRK00596.1"/>
    <property type="match status" value="1"/>
</dbReference>
<dbReference type="NCBIfam" id="TIGR01049">
    <property type="entry name" value="rpsJ_bact"/>
    <property type="match status" value="1"/>
</dbReference>
<dbReference type="PANTHER" id="PTHR11700">
    <property type="entry name" value="30S RIBOSOMAL PROTEIN S10 FAMILY MEMBER"/>
    <property type="match status" value="1"/>
</dbReference>
<dbReference type="Pfam" id="PF00338">
    <property type="entry name" value="Ribosomal_S10"/>
    <property type="match status" value="1"/>
</dbReference>
<dbReference type="PRINTS" id="PR00971">
    <property type="entry name" value="RIBOSOMALS10"/>
</dbReference>
<dbReference type="SMART" id="SM01403">
    <property type="entry name" value="Ribosomal_S10"/>
    <property type="match status" value="1"/>
</dbReference>
<dbReference type="SUPFAM" id="SSF54999">
    <property type="entry name" value="Ribosomal protein S10"/>
    <property type="match status" value="1"/>
</dbReference>
<dbReference type="PROSITE" id="PS00361">
    <property type="entry name" value="RIBOSOMAL_S10"/>
    <property type="match status" value="1"/>
</dbReference>
<organism>
    <name type="scientific">Buchnera aphidicola subsp. Cinara cedri (strain Cc)</name>
    <dbReference type="NCBI Taxonomy" id="372461"/>
    <lineage>
        <taxon>Bacteria</taxon>
        <taxon>Pseudomonadati</taxon>
        <taxon>Pseudomonadota</taxon>
        <taxon>Gammaproteobacteria</taxon>
        <taxon>Enterobacterales</taxon>
        <taxon>Erwiniaceae</taxon>
        <taxon>Buchnera</taxon>
    </lineage>
</organism>
<reference key="1">
    <citation type="journal article" date="2006" name="Science">
        <title>A small microbial genome: the end of a long symbiotic relationship?</title>
        <authorList>
            <person name="Perez-Brocal V."/>
            <person name="Gil R."/>
            <person name="Ramos S."/>
            <person name="Lamelas A."/>
            <person name="Postigo M."/>
            <person name="Michelena J.M."/>
            <person name="Silva F.J."/>
            <person name="Moya A."/>
            <person name="Latorre A."/>
        </authorList>
    </citation>
    <scope>NUCLEOTIDE SEQUENCE [LARGE SCALE GENOMIC DNA]</scope>
    <source>
        <strain>Cc</strain>
    </source>
</reference>
<feature type="chain" id="PRO_1000014994" description="Small ribosomal subunit protein uS10">
    <location>
        <begin position="1"/>
        <end position="103"/>
    </location>
</feature>
<comment type="function">
    <text evidence="1">Involved in the binding of tRNA to the ribosomes.</text>
</comment>
<comment type="subunit">
    <text evidence="1">Part of the 30S ribosomal subunit.</text>
</comment>
<comment type="similarity">
    <text evidence="1">Belongs to the universal ribosomal protein uS10 family.</text>
</comment>
<keyword id="KW-1185">Reference proteome</keyword>
<keyword id="KW-0687">Ribonucleoprotein</keyword>
<keyword id="KW-0689">Ribosomal protein</keyword>
<gene>
    <name evidence="1" type="primary">rpsJ</name>
    <name type="ordered locus">BCc_342</name>
</gene>
<sequence length="103" mass="11790">MQNQRIRIRLKAFDYRLIDQSTLEIVNTAKRTGAKVLGPIPLPTRKERFTILVSPHVNKDARDQYEIRTHKRLIDIVQPTEKTVDALMRLDLAAGVDVQISLG</sequence>